<sequence length="1048" mass="118590">MTISGGNQHNNNANRKYEKLIKQPQMQFGSSVTGTQTDVDSCRDADADANAVRQDFSNFNKHFGNGHAITDRTMLLRLEDDVTTAAGIVTYKGKSNGNGNGNGNGSIGSISLDFNGSPTSSTSIGIASGSSSNTHLASGGGVGGIGGSEPAGWMCHCCNLIARRCFGINVRRCVLALLAITMVSIFYYTHYVDTGVFNGLIQRDTHPAPIINCRMINSGGKHIRNASPAPDHRSEARLRIDPKVLVFVETTYSGLGRDIAELLVYNRIKYKIEVAGKSLPVLTNLDKGRYGVIVFENLDKYLNMDKWNRELLDKYCREYSVGIVGFVSPSEETLVGAQLRDFPLFVNTNLRLRDASLNPLSSVLRLTRAGETAWGALPGDDWAVFQHNHSTYEPVEWAQRNTQEYPADSVGQVQLPLTTVLQDRGQLDGIQRVLFGSSLRFWLHRLVFLDALSYLSHGQLSLNLERMILVDIDDIFVGEKGTRLRPDDVRALIATQKNIAAMVPGFRFNLGFSGKYYHHGTREENLGDDFLLQNVQEFNWFSHMWKHQQPHLYDNLTLLMAEMHLNYAFAVDHNIPTDSGYSISPHHSGVYPAHELLYMAWKKVWNVKVTSTEEYPHLRPARLRRGFIHRNIMVLPRQTCGLFTHTMYIDRYPGGRDKLDESIQGGELFQTIVYNPINIFMTHMSNYGSDRLALYTFQSVIKFLQCWTNLKLASAPPVQLAEMYFRLHPEEVDPVWGNPCDDVRHKKIWSKTKNCDSLPKFLVIGPQKTGTTALYTFLSMHGSIASNIASPETFEEVQFFNGNNYYRGLDWYMDFFPSESLPNTSSPMPTQLGSPRFMFEKSATYFDGEAVPKRSHALLPHAKIVTILISPAKRAYSWYQHQRSHGDVIANNYSFYQVITASDSAPRALKDLRNRCLNPGKYAQHLEHWLAYYPAQQLHIIDGEQLRLNPIDVMNELQRFLKIQPLLDYSNHLRYDVKKGFYCQAVSEKRNKCLGKSKGRQYPAMDERSAKLLQRYYLNHNTALVKLLKKLGSRPIPQWLKDDLSTGT</sequence>
<name>NDST_DROME</name>
<proteinExistence type="evidence at protein level"/>
<evidence type="ECO:0000250" key="1"/>
<evidence type="ECO:0000255" key="2"/>
<evidence type="ECO:0000269" key="3">
    <source>
    </source>
</evidence>
<evidence type="ECO:0000269" key="4">
    <source>
    </source>
</evidence>
<evidence type="ECO:0000269" key="5">
    <source>
    </source>
</evidence>
<evidence type="ECO:0000269" key="6">
    <source>
    </source>
</evidence>
<evidence type="ECO:0000305" key="7"/>
<feature type="chain" id="PRO_0000085226" description="Bifunctional heparan sulfate N-deacetylase/N-sulfotransferase">
    <location>
        <begin position="1"/>
        <end position="1048"/>
    </location>
</feature>
<feature type="topological domain" description="Cytoplasmic" evidence="2">
    <location>
        <begin position="1"/>
        <end position="172"/>
    </location>
</feature>
<feature type="transmembrane region" description="Helical; Signal-anchor for type II membrane protein" evidence="2">
    <location>
        <begin position="173"/>
        <end position="192"/>
    </location>
</feature>
<feature type="topological domain" description="Lumenal" evidence="2">
    <location>
        <begin position="193"/>
        <end position="1048"/>
    </location>
</feature>
<feature type="region of interest" description="Heparan sulfate N-deacetylase">
    <location>
        <begin position="192"/>
        <end position="752"/>
    </location>
</feature>
<feature type="region of interest" description="Heparan sulfate N-sulfotransferase">
    <location>
        <begin position="753"/>
        <end position="1048"/>
    </location>
</feature>
<feature type="active site" description="For sulfotransferase activity" evidence="1">
    <location>
        <position position="768"/>
    </location>
</feature>
<feature type="binding site" evidence="1">
    <location>
        <begin position="768"/>
        <end position="772"/>
    </location>
    <ligand>
        <name>3'-phosphoadenylyl sulfate</name>
        <dbReference type="ChEBI" id="CHEBI:58339"/>
    </ligand>
</feature>
<feature type="binding site" evidence="1">
    <location>
        <position position="877"/>
    </location>
    <ligand>
        <name>3'-phosphoadenylyl sulfate</name>
        <dbReference type="ChEBI" id="CHEBI:58339"/>
    </ligand>
</feature>
<feature type="binding site" evidence="1">
    <location>
        <begin position="998"/>
        <end position="1002"/>
    </location>
    <ligand>
        <name>3'-phosphoadenylyl sulfate</name>
        <dbReference type="ChEBI" id="CHEBI:58339"/>
    </ligand>
</feature>
<feature type="glycosylation site" description="N-linked (GlcNAc...) asparagine" evidence="2">
    <location>
        <position position="388"/>
    </location>
</feature>
<feature type="glycosylation site" description="N-linked (GlcNAc...) asparagine" evidence="2">
    <location>
        <position position="555"/>
    </location>
</feature>
<feature type="glycosylation site" description="N-linked (GlcNAc...) asparagine" evidence="2">
    <location>
        <position position="823"/>
    </location>
</feature>
<feature type="glycosylation site" description="N-linked (GlcNAc...) asparagine" evidence="2">
    <location>
        <position position="892"/>
    </location>
</feature>
<feature type="disulfide bond" evidence="1">
    <location>
        <begin position="983"/>
        <end position="993"/>
    </location>
</feature>
<reference key="1">
    <citation type="journal article" date="1999" name="Nature">
        <title>Dally cooperates with Drosophila Frizzled 2 to transduce Wingless signalling.</title>
        <authorList>
            <person name="Lin X."/>
            <person name="Perrimon N."/>
        </authorList>
    </citation>
    <scope>NUCLEOTIDE SEQUENCE [MRNA]</scope>
    <scope>FUNCTION IN WG SIGNALING</scope>
</reference>
<reference key="2">
    <citation type="journal article" date="2000" name="Science">
        <title>The genome sequence of Drosophila melanogaster.</title>
        <authorList>
            <person name="Adams M.D."/>
            <person name="Celniker S.E."/>
            <person name="Holt R.A."/>
            <person name="Evans C.A."/>
            <person name="Gocayne J.D."/>
            <person name="Amanatides P.G."/>
            <person name="Scherer S.E."/>
            <person name="Li P.W."/>
            <person name="Hoskins R.A."/>
            <person name="Galle R.F."/>
            <person name="George R.A."/>
            <person name="Lewis S.E."/>
            <person name="Richards S."/>
            <person name="Ashburner M."/>
            <person name="Henderson S.N."/>
            <person name="Sutton G.G."/>
            <person name="Wortman J.R."/>
            <person name="Yandell M.D."/>
            <person name="Zhang Q."/>
            <person name="Chen L.X."/>
            <person name="Brandon R.C."/>
            <person name="Rogers Y.-H.C."/>
            <person name="Blazej R.G."/>
            <person name="Champe M."/>
            <person name="Pfeiffer B.D."/>
            <person name="Wan K.H."/>
            <person name="Doyle C."/>
            <person name="Baxter E.G."/>
            <person name="Helt G."/>
            <person name="Nelson C.R."/>
            <person name="Miklos G.L.G."/>
            <person name="Abril J.F."/>
            <person name="Agbayani A."/>
            <person name="An H.-J."/>
            <person name="Andrews-Pfannkoch C."/>
            <person name="Baldwin D."/>
            <person name="Ballew R.M."/>
            <person name="Basu A."/>
            <person name="Baxendale J."/>
            <person name="Bayraktaroglu L."/>
            <person name="Beasley E.M."/>
            <person name="Beeson K.Y."/>
            <person name="Benos P.V."/>
            <person name="Berman B.P."/>
            <person name="Bhandari D."/>
            <person name="Bolshakov S."/>
            <person name="Borkova D."/>
            <person name="Botchan M.R."/>
            <person name="Bouck J."/>
            <person name="Brokstein P."/>
            <person name="Brottier P."/>
            <person name="Burtis K.C."/>
            <person name="Busam D.A."/>
            <person name="Butler H."/>
            <person name="Cadieu E."/>
            <person name="Center A."/>
            <person name="Chandra I."/>
            <person name="Cherry J.M."/>
            <person name="Cawley S."/>
            <person name="Dahlke C."/>
            <person name="Davenport L.B."/>
            <person name="Davies P."/>
            <person name="de Pablos B."/>
            <person name="Delcher A."/>
            <person name="Deng Z."/>
            <person name="Mays A.D."/>
            <person name="Dew I."/>
            <person name="Dietz S.M."/>
            <person name="Dodson K."/>
            <person name="Doup L.E."/>
            <person name="Downes M."/>
            <person name="Dugan-Rocha S."/>
            <person name="Dunkov B.C."/>
            <person name="Dunn P."/>
            <person name="Durbin K.J."/>
            <person name="Evangelista C.C."/>
            <person name="Ferraz C."/>
            <person name="Ferriera S."/>
            <person name="Fleischmann W."/>
            <person name="Fosler C."/>
            <person name="Gabrielian A.E."/>
            <person name="Garg N.S."/>
            <person name="Gelbart W.M."/>
            <person name="Glasser K."/>
            <person name="Glodek A."/>
            <person name="Gong F."/>
            <person name="Gorrell J.H."/>
            <person name="Gu Z."/>
            <person name="Guan P."/>
            <person name="Harris M."/>
            <person name="Harris N.L."/>
            <person name="Harvey D.A."/>
            <person name="Heiman T.J."/>
            <person name="Hernandez J.R."/>
            <person name="Houck J."/>
            <person name="Hostin D."/>
            <person name="Houston K.A."/>
            <person name="Howland T.J."/>
            <person name="Wei M.-H."/>
            <person name="Ibegwam C."/>
            <person name="Jalali M."/>
            <person name="Kalush F."/>
            <person name="Karpen G.H."/>
            <person name="Ke Z."/>
            <person name="Kennison J.A."/>
            <person name="Ketchum K.A."/>
            <person name="Kimmel B.E."/>
            <person name="Kodira C.D."/>
            <person name="Kraft C.L."/>
            <person name="Kravitz S."/>
            <person name="Kulp D."/>
            <person name="Lai Z."/>
            <person name="Lasko P."/>
            <person name="Lei Y."/>
            <person name="Levitsky A.A."/>
            <person name="Li J.H."/>
            <person name="Li Z."/>
            <person name="Liang Y."/>
            <person name="Lin X."/>
            <person name="Liu X."/>
            <person name="Mattei B."/>
            <person name="McIntosh T.C."/>
            <person name="McLeod M.P."/>
            <person name="McPherson D."/>
            <person name="Merkulov G."/>
            <person name="Milshina N.V."/>
            <person name="Mobarry C."/>
            <person name="Morris J."/>
            <person name="Moshrefi A."/>
            <person name="Mount S.M."/>
            <person name="Moy M."/>
            <person name="Murphy B."/>
            <person name="Murphy L."/>
            <person name="Muzny D.M."/>
            <person name="Nelson D.L."/>
            <person name="Nelson D.R."/>
            <person name="Nelson K.A."/>
            <person name="Nixon K."/>
            <person name="Nusskern D.R."/>
            <person name="Pacleb J.M."/>
            <person name="Palazzolo M."/>
            <person name="Pittman G.S."/>
            <person name="Pan S."/>
            <person name="Pollard J."/>
            <person name="Puri V."/>
            <person name="Reese M.G."/>
            <person name="Reinert K."/>
            <person name="Remington K."/>
            <person name="Saunders R.D.C."/>
            <person name="Scheeler F."/>
            <person name="Shen H."/>
            <person name="Shue B.C."/>
            <person name="Siden-Kiamos I."/>
            <person name="Simpson M."/>
            <person name="Skupski M.P."/>
            <person name="Smith T.J."/>
            <person name="Spier E."/>
            <person name="Spradling A.C."/>
            <person name="Stapleton M."/>
            <person name="Strong R."/>
            <person name="Sun E."/>
            <person name="Svirskas R."/>
            <person name="Tector C."/>
            <person name="Turner R."/>
            <person name="Venter E."/>
            <person name="Wang A.H."/>
            <person name="Wang X."/>
            <person name="Wang Z.-Y."/>
            <person name="Wassarman D.A."/>
            <person name="Weinstock G.M."/>
            <person name="Weissenbach J."/>
            <person name="Williams S.M."/>
            <person name="Woodage T."/>
            <person name="Worley K.C."/>
            <person name="Wu D."/>
            <person name="Yang S."/>
            <person name="Yao Q.A."/>
            <person name="Ye J."/>
            <person name="Yeh R.-F."/>
            <person name="Zaveri J.S."/>
            <person name="Zhan M."/>
            <person name="Zhang G."/>
            <person name="Zhao Q."/>
            <person name="Zheng L."/>
            <person name="Zheng X.H."/>
            <person name="Zhong F.N."/>
            <person name="Zhong W."/>
            <person name="Zhou X."/>
            <person name="Zhu S.C."/>
            <person name="Zhu X."/>
            <person name="Smith H.O."/>
            <person name="Gibbs R.A."/>
            <person name="Myers E.W."/>
            <person name="Rubin G.M."/>
            <person name="Venter J.C."/>
        </authorList>
    </citation>
    <scope>NUCLEOTIDE SEQUENCE [LARGE SCALE GENOMIC DNA]</scope>
    <source>
        <strain>Berkeley</strain>
    </source>
</reference>
<reference key="3">
    <citation type="journal article" date="2002" name="Genome Biol.">
        <title>Annotation of the Drosophila melanogaster euchromatic genome: a systematic review.</title>
        <authorList>
            <person name="Misra S."/>
            <person name="Crosby M.A."/>
            <person name="Mungall C.J."/>
            <person name="Matthews B.B."/>
            <person name="Campbell K.S."/>
            <person name="Hradecky P."/>
            <person name="Huang Y."/>
            <person name="Kaminker J.S."/>
            <person name="Millburn G.H."/>
            <person name="Prochnik S.E."/>
            <person name="Smith C.D."/>
            <person name="Tupy J.L."/>
            <person name="Whitfield E.J."/>
            <person name="Bayraktaroglu L."/>
            <person name="Berman B.P."/>
            <person name="Bettencourt B.R."/>
            <person name="Celniker S.E."/>
            <person name="de Grey A.D.N.J."/>
            <person name="Drysdale R.A."/>
            <person name="Harris N.L."/>
            <person name="Richter J."/>
            <person name="Russo S."/>
            <person name="Schroeder A.J."/>
            <person name="Shu S.Q."/>
            <person name="Stapleton M."/>
            <person name="Yamada C."/>
            <person name="Ashburner M."/>
            <person name="Gelbart W.M."/>
            <person name="Rubin G.M."/>
            <person name="Lewis S.E."/>
        </authorList>
    </citation>
    <scope>GENOME REANNOTATION</scope>
    <source>
        <strain>Berkeley</strain>
    </source>
</reference>
<reference key="4">
    <citation type="journal article" date="1999" name="Development">
        <title>Heparan sulfate proteoglycans are essential for FGF receptor signaling during Drosophila embryonic development.</title>
        <authorList>
            <person name="Lin X."/>
            <person name="Buff E.M."/>
            <person name="Perrimon N."/>
            <person name="Michelson A.M."/>
        </authorList>
    </citation>
    <scope>FUNCTION IN FGF RECEPTOR SIGNALING</scope>
</reference>
<reference key="5">
    <citation type="journal article" date="2000" name="J. Biol. Chem.">
        <title>Structural analysis of glycosaminoglycans in Drosophila and Caenorhabditis elegans and demonstration that tout-velu, a Drosophila gene related to EXT tumor suppressors, affects heparan sulfate in vivo.</title>
        <authorList>
            <person name="Toyoda H."/>
            <person name="Kinoshita-Toyoda A."/>
            <person name="Selleck S.B."/>
        </authorList>
    </citation>
    <scope>FUNCTION</scope>
</reference>
<reference key="6">
    <citation type="journal article" date="2004" name="Dev. Biol.">
        <title>The Wingless morphogen gradient is established by the cooperative action of Frizzled and Heparan Sulfate Proteoglycan receptors.</title>
        <authorList>
            <person name="Baeg G.-H."/>
            <person name="Selva E.M."/>
            <person name="Goodman R.M."/>
            <person name="Dasgupta R."/>
            <person name="Perrimon N."/>
        </authorList>
    </citation>
    <scope>FUNCTION</scope>
</reference>
<organism>
    <name type="scientific">Drosophila melanogaster</name>
    <name type="common">Fruit fly</name>
    <dbReference type="NCBI Taxonomy" id="7227"/>
    <lineage>
        <taxon>Eukaryota</taxon>
        <taxon>Metazoa</taxon>
        <taxon>Ecdysozoa</taxon>
        <taxon>Arthropoda</taxon>
        <taxon>Hexapoda</taxon>
        <taxon>Insecta</taxon>
        <taxon>Pterygota</taxon>
        <taxon>Neoptera</taxon>
        <taxon>Endopterygota</taxon>
        <taxon>Diptera</taxon>
        <taxon>Brachycera</taxon>
        <taxon>Muscomorpha</taxon>
        <taxon>Ephydroidea</taxon>
        <taxon>Drosophilidae</taxon>
        <taxon>Drosophila</taxon>
        <taxon>Sophophora</taxon>
    </lineage>
</organism>
<keyword id="KW-1015">Disulfide bond</keyword>
<keyword id="KW-0325">Glycoprotein</keyword>
<keyword id="KW-0333">Golgi apparatus</keyword>
<keyword id="KW-0378">Hydrolase</keyword>
<keyword id="KW-0472">Membrane</keyword>
<keyword id="KW-0511">Multifunctional enzyme</keyword>
<keyword id="KW-1185">Reference proteome</keyword>
<keyword id="KW-0735">Signal-anchor</keyword>
<keyword id="KW-0808">Transferase</keyword>
<keyword id="KW-0812">Transmembrane</keyword>
<keyword id="KW-1133">Transmembrane helix</keyword>
<keyword id="KW-0879">Wnt signaling pathway</keyword>
<gene>
    <name type="primary">sfl</name>
    <name type="ORF">CG8339</name>
</gene>
<accession>Q9V3L1</accession>
<comment type="function">
    <text evidence="3 4 5 6">Essential bifunctional enzyme that catalyzes both the N-deacetylation and the N-sulfation of glucosamine (GlcNAc) of the glycosaminoglycan in heparan sulfate. Modifies the GlcNAc-GlcA disaccharide repeating sugar backbone to make N-sulfated heparosan, a prerequisite substrate for later modifications in heparin biosynthesis. Plays a role in diffusion of morphogen wingless (wg) via its role in heparan sulfate proteoglycans (HSPGs) biosynthesis, HSPGs being required for movement of wg morphogens. Required for wg signaling during both embryonic and imaginal disk development. Also required for FGF receptor signaling.</text>
</comment>
<comment type="catalytic activity">
    <reaction>
        <text>alpha-D-glucosaminyl-[heparan sulfate](n) + 3'-phosphoadenylyl sulfate = N-sulfo-alpha-D-glucosaminyl-[heparan sulfate](n) + adenosine 3',5'-bisphosphate + 2 H(+)</text>
        <dbReference type="Rhea" id="RHEA:21980"/>
        <dbReference type="Rhea" id="RHEA-COMP:9830"/>
        <dbReference type="Rhea" id="RHEA-COMP:14602"/>
        <dbReference type="ChEBI" id="CHEBI:15378"/>
        <dbReference type="ChEBI" id="CHEBI:58339"/>
        <dbReference type="ChEBI" id="CHEBI:58343"/>
        <dbReference type="ChEBI" id="CHEBI:58388"/>
        <dbReference type="ChEBI" id="CHEBI:140572"/>
        <dbReference type="EC" id="2.8.2.8"/>
    </reaction>
</comment>
<comment type="pathway">
    <text>Glycan metabolism; heparan sulfate biosynthesis.</text>
</comment>
<comment type="pathway">
    <text>Glycan metabolism; heparin biosynthesis.</text>
</comment>
<comment type="subunit">
    <text evidence="1">Monomer.</text>
</comment>
<comment type="subcellular location">
    <subcellularLocation>
        <location evidence="1">Golgi apparatus membrane</location>
        <topology evidence="1">Single-pass type II membrane protein</topology>
    </subcellularLocation>
</comment>
<comment type="similarity">
    <text evidence="7">Belongs to the sulfotransferase 1 family. NDST subfamily.</text>
</comment>
<comment type="caution">
    <text evidence="7">It is uncertain whether Met-1 or Met-154 is the initiator.</text>
</comment>
<dbReference type="EC" id="2.8.2.8"/>
<dbReference type="EC" id="3.-.-.-"/>
<dbReference type="EC" id="2.8.2.-"/>
<dbReference type="EMBL" id="AF175689">
    <property type="protein sequence ID" value="AAD51842.1"/>
    <property type="molecule type" value="mRNA"/>
</dbReference>
<dbReference type="EMBL" id="AE014296">
    <property type="protein sequence ID" value="AAF50658.1"/>
    <property type="molecule type" value="Genomic_DNA"/>
</dbReference>
<dbReference type="RefSeq" id="NP_001163354.1">
    <property type="nucleotide sequence ID" value="NM_001169883.3"/>
</dbReference>
<dbReference type="RefSeq" id="NP_523946.1">
    <property type="nucleotide sequence ID" value="NM_079222.5"/>
</dbReference>
<dbReference type="SMR" id="Q9V3L1"/>
<dbReference type="BioGRID" id="64188">
    <property type="interactions" value="11"/>
</dbReference>
<dbReference type="FunCoup" id="Q9V3L1">
    <property type="interactions" value="1191"/>
</dbReference>
<dbReference type="IntAct" id="Q9V3L1">
    <property type="interactions" value="6"/>
</dbReference>
<dbReference type="STRING" id="7227.FBpp0076677"/>
<dbReference type="GlyCosmos" id="Q9V3L1">
    <property type="glycosylation" value="4 sites, No reported glycans"/>
</dbReference>
<dbReference type="GlyGen" id="Q9V3L1">
    <property type="glycosylation" value="4 sites"/>
</dbReference>
<dbReference type="PaxDb" id="7227-FBpp0076677"/>
<dbReference type="DNASU" id="38736"/>
<dbReference type="EnsemblMetazoa" id="FBtr0076968">
    <property type="protein sequence ID" value="FBpp0076677"/>
    <property type="gene ID" value="FBgn0020251"/>
</dbReference>
<dbReference type="EnsemblMetazoa" id="FBtr0301562">
    <property type="protein sequence ID" value="FBpp0290777"/>
    <property type="gene ID" value="FBgn0020251"/>
</dbReference>
<dbReference type="GeneID" id="38736"/>
<dbReference type="KEGG" id="dme:Dmel_CG8339"/>
<dbReference type="UCSC" id="CG8339-RA">
    <property type="organism name" value="d. melanogaster"/>
</dbReference>
<dbReference type="AGR" id="FB:FBgn0020251"/>
<dbReference type="CTD" id="38736"/>
<dbReference type="FlyBase" id="FBgn0020251">
    <property type="gene designation" value="sfl"/>
</dbReference>
<dbReference type="VEuPathDB" id="VectorBase:FBgn0020251"/>
<dbReference type="eggNOG" id="KOG3703">
    <property type="taxonomic scope" value="Eukaryota"/>
</dbReference>
<dbReference type="GeneTree" id="ENSGT00940000168016"/>
<dbReference type="HOGENOM" id="CLU_011357_2_0_1"/>
<dbReference type="InParanoid" id="Q9V3L1"/>
<dbReference type="OMA" id="GLKFWLH"/>
<dbReference type="OrthoDB" id="8958249at2759"/>
<dbReference type="PhylomeDB" id="Q9V3L1"/>
<dbReference type="Reactome" id="R-DME-2022928">
    <property type="pathway name" value="HS-GAG biosynthesis"/>
</dbReference>
<dbReference type="SignaLink" id="Q9V3L1"/>
<dbReference type="UniPathway" id="UPA00756"/>
<dbReference type="UniPathway" id="UPA00862"/>
<dbReference type="BioGRID-ORCS" id="38736">
    <property type="hits" value="0 hits in 3 CRISPR screens"/>
</dbReference>
<dbReference type="GenomeRNAi" id="38736"/>
<dbReference type="PRO" id="PR:Q9V3L1"/>
<dbReference type="Proteomes" id="UP000000803">
    <property type="component" value="Chromosome 3L"/>
</dbReference>
<dbReference type="Bgee" id="FBgn0020251">
    <property type="expression patterns" value="Expressed in photoreceptor cell R7 (Drosophila) in insect head and 248 other cell types or tissues"/>
</dbReference>
<dbReference type="ExpressionAtlas" id="Q9V3L1">
    <property type="expression patterns" value="baseline and differential"/>
</dbReference>
<dbReference type="GO" id="GO:0005783">
    <property type="term" value="C:endoplasmic reticulum"/>
    <property type="evidence" value="ECO:0000314"/>
    <property type="project" value="FlyBase"/>
</dbReference>
<dbReference type="GO" id="GO:0005794">
    <property type="term" value="C:Golgi apparatus"/>
    <property type="evidence" value="ECO:0000318"/>
    <property type="project" value="GO_Central"/>
</dbReference>
<dbReference type="GO" id="GO:0000137">
    <property type="term" value="C:Golgi cis cisterna"/>
    <property type="evidence" value="ECO:0000314"/>
    <property type="project" value="FlyBase"/>
</dbReference>
<dbReference type="GO" id="GO:0000139">
    <property type="term" value="C:Golgi membrane"/>
    <property type="evidence" value="ECO:0007669"/>
    <property type="project" value="UniProtKB-SubCell"/>
</dbReference>
<dbReference type="GO" id="GO:0019213">
    <property type="term" value="F:deacetylase activity"/>
    <property type="evidence" value="ECO:0000318"/>
    <property type="project" value="GO_Central"/>
</dbReference>
<dbReference type="GO" id="GO:0102140">
    <property type="term" value="F:heparan sulfate N-deacetylase activity"/>
    <property type="evidence" value="ECO:0000250"/>
    <property type="project" value="FlyBase"/>
</dbReference>
<dbReference type="GO" id="GO:0015016">
    <property type="term" value="F:heparan sulfate N-sulfotransferase activity"/>
    <property type="evidence" value="ECO:0000315"/>
    <property type="project" value="UniProtKB"/>
</dbReference>
<dbReference type="GO" id="GO:0007427">
    <property type="term" value="P:epithelial cell migration, open tracheal system"/>
    <property type="evidence" value="ECO:0000315"/>
    <property type="project" value="UniProtKB"/>
</dbReference>
<dbReference type="GO" id="GO:0008543">
    <property type="term" value="P:fibroblast growth factor receptor signaling pathway"/>
    <property type="evidence" value="ECO:0000315"/>
    <property type="project" value="UniProtKB"/>
</dbReference>
<dbReference type="GO" id="GO:0006024">
    <property type="term" value="P:glycosaminoglycan biosynthetic process"/>
    <property type="evidence" value="ECO:0000315"/>
    <property type="project" value="UniProtKB"/>
</dbReference>
<dbReference type="GO" id="GO:0015012">
    <property type="term" value="P:heparan sulfate proteoglycan biosynthetic process"/>
    <property type="evidence" value="ECO:0000315"/>
    <property type="project" value="UniProtKB"/>
</dbReference>
<dbReference type="GO" id="GO:0030210">
    <property type="term" value="P:heparin proteoglycan biosynthetic process"/>
    <property type="evidence" value="ECO:0007669"/>
    <property type="project" value="UniProtKB-UniPathway"/>
</dbReference>
<dbReference type="GO" id="GO:0008587">
    <property type="term" value="P:imaginal disc-derived wing margin morphogenesis"/>
    <property type="evidence" value="ECO:0000315"/>
    <property type="project" value="FlyBase"/>
</dbReference>
<dbReference type="GO" id="GO:0007474">
    <property type="term" value="P:imaginal disc-derived wing vein specification"/>
    <property type="evidence" value="ECO:0000315"/>
    <property type="project" value="FlyBase"/>
</dbReference>
<dbReference type="GO" id="GO:0007509">
    <property type="term" value="P:mesoderm migration involved in gastrulation"/>
    <property type="evidence" value="ECO:0000315"/>
    <property type="project" value="UniProtKB"/>
</dbReference>
<dbReference type="GO" id="GO:0045570">
    <property type="term" value="P:regulation of imaginal disc growth"/>
    <property type="evidence" value="ECO:0000315"/>
    <property type="project" value="FlyBase"/>
</dbReference>
<dbReference type="GO" id="GO:0007367">
    <property type="term" value="P:segment polarity determination"/>
    <property type="evidence" value="ECO:0000315"/>
    <property type="project" value="FlyBase"/>
</dbReference>
<dbReference type="GO" id="GO:0007283">
    <property type="term" value="P:spermatogenesis"/>
    <property type="evidence" value="ECO:0000315"/>
    <property type="project" value="FlyBase"/>
</dbReference>
<dbReference type="GO" id="GO:0006790">
    <property type="term" value="P:sulfur compound metabolic process"/>
    <property type="evidence" value="ECO:0000315"/>
    <property type="project" value="UniProtKB"/>
</dbReference>
<dbReference type="GO" id="GO:0016055">
    <property type="term" value="P:Wnt signaling pathway"/>
    <property type="evidence" value="ECO:0000315"/>
    <property type="project" value="UniProtKB"/>
</dbReference>
<dbReference type="FunFam" id="3.40.50.300:FF:000176">
    <property type="entry name" value="bifunctional heparan sulfate N-deacetylase/N-sulfotransferase 1"/>
    <property type="match status" value="1"/>
</dbReference>
<dbReference type="Gene3D" id="3.40.50.300">
    <property type="entry name" value="P-loop containing nucleotide triphosphate hydrolases"/>
    <property type="match status" value="1"/>
</dbReference>
<dbReference type="InterPro" id="IPR021930">
    <property type="entry name" value="Heparan_SO4_deacetylase_dom"/>
</dbReference>
<dbReference type="InterPro" id="IPR056793">
    <property type="entry name" value="HSNSD_N"/>
</dbReference>
<dbReference type="InterPro" id="IPR037359">
    <property type="entry name" value="NST/OST"/>
</dbReference>
<dbReference type="InterPro" id="IPR027417">
    <property type="entry name" value="P-loop_NTPase"/>
</dbReference>
<dbReference type="InterPro" id="IPR000863">
    <property type="entry name" value="Sulfotransferase_dom"/>
</dbReference>
<dbReference type="PANTHER" id="PTHR10605:SF56">
    <property type="entry name" value="BIFUNCTIONAL HEPARAN SULFATE N-DEACETYLASE_N-SULFOTRANSFERASE"/>
    <property type="match status" value="1"/>
</dbReference>
<dbReference type="PANTHER" id="PTHR10605">
    <property type="entry name" value="HEPARAN SULFATE SULFOTRANSFERASE"/>
    <property type="match status" value="1"/>
</dbReference>
<dbReference type="Pfam" id="PF12062">
    <property type="entry name" value="HSNSD-CE"/>
    <property type="match status" value="1"/>
</dbReference>
<dbReference type="Pfam" id="PF25119">
    <property type="entry name" value="HSNSD_N"/>
    <property type="match status" value="1"/>
</dbReference>
<dbReference type="Pfam" id="PF00685">
    <property type="entry name" value="Sulfotransfer_1"/>
    <property type="match status" value="1"/>
</dbReference>
<dbReference type="SUPFAM" id="SSF52540">
    <property type="entry name" value="P-loop containing nucleoside triphosphate hydrolases"/>
    <property type="match status" value="1"/>
</dbReference>
<protein>
    <recommendedName>
        <fullName>Bifunctional heparan sulfate N-deacetylase/N-sulfotransferase</fullName>
        <ecNumber>2.8.2.8</ecNumber>
    </recommendedName>
    <alternativeName>
        <fullName>Glucosaminyl N-deacetylase/N-sulfotransferase</fullName>
    </alternativeName>
    <alternativeName>
        <fullName>Sulfateless</fullName>
    </alternativeName>
    <domain>
        <recommendedName>
            <fullName>Heparan sulfate N-deacetylase</fullName>
            <ecNumber>3.-.-.-</ecNumber>
        </recommendedName>
    </domain>
    <domain>
        <recommendedName>
            <fullName>Heparan sulfate N-sulfotransferase</fullName>
            <ecNumber>2.8.2.-</ecNumber>
        </recommendedName>
    </domain>
</protein>